<comment type="function">
    <text evidence="1">Converts 2C-methyl-D-erythritol 2,4-cyclodiphosphate (ME-2,4cPP) into 1-hydroxy-2-methyl-2-(E)-butenyl 4-diphosphate.</text>
</comment>
<comment type="catalytic activity">
    <reaction evidence="1">
        <text>(2E)-4-hydroxy-3-methylbut-2-enyl diphosphate + oxidized [flavodoxin] + H2O + 2 H(+) = 2-C-methyl-D-erythritol 2,4-cyclic diphosphate + reduced [flavodoxin]</text>
        <dbReference type="Rhea" id="RHEA:43604"/>
        <dbReference type="Rhea" id="RHEA-COMP:10622"/>
        <dbReference type="Rhea" id="RHEA-COMP:10623"/>
        <dbReference type="ChEBI" id="CHEBI:15377"/>
        <dbReference type="ChEBI" id="CHEBI:15378"/>
        <dbReference type="ChEBI" id="CHEBI:57618"/>
        <dbReference type="ChEBI" id="CHEBI:58210"/>
        <dbReference type="ChEBI" id="CHEBI:58483"/>
        <dbReference type="ChEBI" id="CHEBI:128753"/>
        <dbReference type="EC" id="1.17.7.3"/>
    </reaction>
</comment>
<comment type="cofactor">
    <cofactor evidence="1">
        <name>[4Fe-4S] cluster</name>
        <dbReference type="ChEBI" id="CHEBI:49883"/>
    </cofactor>
    <text evidence="1">Binds 1 [4Fe-4S] cluster.</text>
</comment>
<comment type="pathway">
    <text evidence="1">Isoprenoid biosynthesis; isopentenyl diphosphate biosynthesis via DXP pathway; isopentenyl diphosphate from 1-deoxy-D-xylulose 5-phosphate: step 5/6.</text>
</comment>
<comment type="similarity">
    <text evidence="1">Belongs to the IspG family.</text>
</comment>
<sequence length="388" mass="40848">MTSVSLGMPSAPPPVLAPRRKTRQIKVGSVGVGSDSPISVQSMTTTPTTDINATLQQIAELTASGCDIVRVACPSADDAEALPIIARKSQIPVIADIHFQPKYVFAAIEAGCAAVRVNPGNIRKFDDQVKEIARAAKDHGTSIRIGVNAGSLEPGILKKYGKATPEALVESAVWEASLFEEHGFHDFKISVKHNDPVIMVAAYEMLAEKGDWPLHLGVTEAGPAFQGTIKSATAFGALLSRGIGDTIRVSLSAPPVEEIKVGNQILQSLNLRPRKLEIVSCPSCGRAQVDVYTLAEQVTAGLEGMEIPLRVAVMGCVVNGPGEAREADLGVASGNGKGQIFVKGEVIKTVPESEIVETLIEEAMRIAEEMGEADGEDAVKGSPVVSVS</sequence>
<organism>
    <name type="scientific">Arthrobacter sp. (strain FB24)</name>
    <dbReference type="NCBI Taxonomy" id="290399"/>
    <lineage>
        <taxon>Bacteria</taxon>
        <taxon>Bacillati</taxon>
        <taxon>Actinomycetota</taxon>
        <taxon>Actinomycetes</taxon>
        <taxon>Micrococcales</taxon>
        <taxon>Micrococcaceae</taxon>
        <taxon>Arthrobacter</taxon>
    </lineage>
</organism>
<proteinExistence type="inferred from homology"/>
<accession>A0JUS8</accession>
<dbReference type="EC" id="1.17.7.3" evidence="1"/>
<dbReference type="EMBL" id="CP000454">
    <property type="protein sequence ID" value="ABK02798.1"/>
    <property type="molecule type" value="Genomic_DNA"/>
</dbReference>
<dbReference type="RefSeq" id="WP_011691265.1">
    <property type="nucleotide sequence ID" value="NC_008541.1"/>
</dbReference>
<dbReference type="SMR" id="A0JUS8"/>
<dbReference type="STRING" id="290399.Arth_1404"/>
<dbReference type="KEGG" id="art:Arth_1404"/>
<dbReference type="eggNOG" id="COG0821">
    <property type="taxonomic scope" value="Bacteria"/>
</dbReference>
<dbReference type="HOGENOM" id="CLU_042258_0_0_11"/>
<dbReference type="OrthoDB" id="9803214at2"/>
<dbReference type="UniPathway" id="UPA00056">
    <property type="reaction ID" value="UER00096"/>
</dbReference>
<dbReference type="Proteomes" id="UP000000754">
    <property type="component" value="Chromosome"/>
</dbReference>
<dbReference type="GO" id="GO:0051539">
    <property type="term" value="F:4 iron, 4 sulfur cluster binding"/>
    <property type="evidence" value="ECO:0007669"/>
    <property type="project" value="UniProtKB-UniRule"/>
</dbReference>
<dbReference type="GO" id="GO:0046429">
    <property type="term" value="F:4-hydroxy-3-methylbut-2-en-1-yl diphosphate synthase activity (ferredoxin)"/>
    <property type="evidence" value="ECO:0007669"/>
    <property type="project" value="UniProtKB-UniRule"/>
</dbReference>
<dbReference type="GO" id="GO:0141197">
    <property type="term" value="F:4-hydroxy-3-methylbut-2-enyl-diphosphate synthase activity (flavodoxin)"/>
    <property type="evidence" value="ECO:0007669"/>
    <property type="project" value="UniProtKB-EC"/>
</dbReference>
<dbReference type="GO" id="GO:0005506">
    <property type="term" value="F:iron ion binding"/>
    <property type="evidence" value="ECO:0007669"/>
    <property type="project" value="InterPro"/>
</dbReference>
<dbReference type="GO" id="GO:0019288">
    <property type="term" value="P:isopentenyl diphosphate biosynthetic process, methylerythritol 4-phosphate pathway"/>
    <property type="evidence" value="ECO:0007669"/>
    <property type="project" value="UniProtKB-UniRule"/>
</dbReference>
<dbReference type="GO" id="GO:0016114">
    <property type="term" value="P:terpenoid biosynthetic process"/>
    <property type="evidence" value="ECO:0007669"/>
    <property type="project" value="InterPro"/>
</dbReference>
<dbReference type="FunFam" id="3.20.20.20:FF:000001">
    <property type="entry name" value="4-hydroxy-3-methylbut-2-en-1-yl diphosphate synthase (flavodoxin)"/>
    <property type="match status" value="1"/>
</dbReference>
<dbReference type="FunFam" id="3.30.413.10:FF:000001">
    <property type="entry name" value="4-hydroxy-3-methylbut-2-en-1-yl diphosphate synthase (flavodoxin)"/>
    <property type="match status" value="1"/>
</dbReference>
<dbReference type="Gene3D" id="3.20.20.20">
    <property type="entry name" value="Dihydropteroate synthase-like"/>
    <property type="match status" value="1"/>
</dbReference>
<dbReference type="Gene3D" id="3.30.413.10">
    <property type="entry name" value="Sulfite Reductase Hemoprotein, domain 1"/>
    <property type="match status" value="1"/>
</dbReference>
<dbReference type="HAMAP" id="MF_00159">
    <property type="entry name" value="IspG"/>
    <property type="match status" value="1"/>
</dbReference>
<dbReference type="InterPro" id="IPR011005">
    <property type="entry name" value="Dihydropteroate_synth-like_sf"/>
</dbReference>
<dbReference type="InterPro" id="IPR016425">
    <property type="entry name" value="IspG_bac"/>
</dbReference>
<dbReference type="InterPro" id="IPR004588">
    <property type="entry name" value="IspG_bac-typ"/>
</dbReference>
<dbReference type="InterPro" id="IPR045854">
    <property type="entry name" value="NO2/SO3_Rdtase_4Fe4S_sf"/>
</dbReference>
<dbReference type="NCBIfam" id="TIGR00612">
    <property type="entry name" value="ispG_gcpE"/>
    <property type="match status" value="1"/>
</dbReference>
<dbReference type="NCBIfam" id="NF001540">
    <property type="entry name" value="PRK00366.1"/>
    <property type="match status" value="1"/>
</dbReference>
<dbReference type="PANTHER" id="PTHR30454">
    <property type="entry name" value="4-HYDROXY-3-METHYLBUT-2-EN-1-YL DIPHOSPHATE SYNTHASE"/>
    <property type="match status" value="1"/>
</dbReference>
<dbReference type="PANTHER" id="PTHR30454:SF0">
    <property type="entry name" value="4-HYDROXY-3-METHYLBUT-2-EN-1-YL DIPHOSPHATE SYNTHASE (FERREDOXIN), CHLOROPLASTIC"/>
    <property type="match status" value="1"/>
</dbReference>
<dbReference type="Pfam" id="PF04551">
    <property type="entry name" value="GcpE"/>
    <property type="match status" value="1"/>
</dbReference>
<dbReference type="PIRSF" id="PIRSF004640">
    <property type="entry name" value="IspG"/>
    <property type="match status" value="1"/>
</dbReference>
<dbReference type="SUPFAM" id="SSF51717">
    <property type="entry name" value="Dihydropteroate synthetase-like"/>
    <property type="match status" value="1"/>
</dbReference>
<dbReference type="SUPFAM" id="SSF56014">
    <property type="entry name" value="Nitrite and sulphite reductase 4Fe-4S domain-like"/>
    <property type="match status" value="1"/>
</dbReference>
<keyword id="KW-0004">4Fe-4S</keyword>
<keyword id="KW-0408">Iron</keyword>
<keyword id="KW-0411">Iron-sulfur</keyword>
<keyword id="KW-0414">Isoprene biosynthesis</keyword>
<keyword id="KW-0479">Metal-binding</keyword>
<keyword id="KW-0560">Oxidoreductase</keyword>
<keyword id="KW-1185">Reference proteome</keyword>
<gene>
    <name evidence="1" type="primary">ispG</name>
    <name type="ordered locus">Arth_1404</name>
</gene>
<name>ISPG_ARTS2</name>
<feature type="chain" id="PRO_1000011436" description="4-hydroxy-3-methylbut-2-en-1-yl diphosphate synthase (flavodoxin)">
    <location>
        <begin position="1"/>
        <end position="388"/>
    </location>
</feature>
<feature type="binding site" evidence="1">
    <location>
        <position position="281"/>
    </location>
    <ligand>
        <name>[4Fe-4S] cluster</name>
        <dbReference type="ChEBI" id="CHEBI:49883"/>
    </ligand>
</feature>
<feature type="binding site" evidence="1">
    <location>
        <position position="284"/>
    </location>
    <ligand>
        <name>[4Fe-4S] cluster</name>
        <dbReference type="ChEBI" id="CHEBI:49883"/>
    </ligand>
</feature>
<feature type="binding site" evidence="1">
    <location>
        <position position="316"/>
    </location>
    <ligand>
        <name>[4Fe-4S] cluster</name>
        <dbReference type="ChEBI" id="CHEBI:49883"/>
    </ligand>
</feature>
<feature type="binding site" evidence="1">
    <location>
        <position position="323"/>
    </location>
    <ligand>
        <name>[4Fe-4S] cluster</name>
        <dbReference type="ChEBI" id="CHEBI:49883"/>
    </ligand>
</feature>
<evidence type="ECO:0000255" key="1">
    <source>
        <dbReference type="HAMAP-Rule" id="MF_00159"/>
    </source>
</evidence>
<reference key="1">
    <citation type="journal article" date="2013" name="Stand. Genomic Sci.">
        <title>Complete genome sequence of Arthrobacter sp. strain FB24.</title>
        <authorList>
            <person name="Nakatsu C.H."/>
            <person name="Barabote R."/>
            <person name="Thompson S."/>
            <person name="Bruce D."/>
            <person name="Detter C."/>
            <person name="Brettin T."/>
            <person name="Han C."/>
            <person name="Beasley F."/>
            <person name="Chen W."/>
            <person name="Konopka A."/>
            <person name="Xie G."/>
        </authorList>
    </citation>
    <scope>NUCLEOTIDE SEQUENCE [LARGE SCALE GENOMIC DNA]</scope>
    <source>
        <strain>FB24</strain>
    </source>
</reference>
<protein>
    <recommendedName>
        <fullName evidence="1">4-hydroxy-3-methylbut-2-en-1-yl diphosphate synthase (flavodoxin)</fullName>
        <ecNumber evidence="1">1.17.7.3</ecNumber>
    </recommendedName>
    <alternativeName>
        <fullName evidence="1">1-hydroxy-2-methyl-2-(E)-butenyl 4-diphosphate synthase</fullName>
    </alternativeName>
</protein>